<name>STXB6_MOUSE</name>
<accession>Q8R3T5</accession>
<comment type="function">
    <text evidence="1">Forms non-fusogenic complexes with SNAP25 and STX1A and may thereby modulate the formation of functional SNARE complexes and exocytosis.</text>
</comment>
<comment type="subunit">
    <text evidence="1">Part of a ternary complex containing SNAP25 and STX1A that can be dissociated by NAPA and NSF. Interacts with STX4A (By similarity).</text>
</comment>
<comment type="subcellular location">
    <subcellularLocation>
        <location evidence="1">Cytoplasm</location>
    </subcellularLocation>
    <subcellularLocation>
        <location evidence="1">Membrane</location>
        <topology evidence="1">Peripheral membrane protein</topology>
    </subcellularLocation>
</comment>
<feature type="initiator methionine" description="Removed" evidence="2">
    <location>
        <position position="1"/>
    </location>
</feature>
<feature type="chain" id="PRO_0000206783" description="Syntaxin-binding protein 6">
    <location>
        <begin position="2"/>
        <end position="210"/>
    </location>
</feature>
<feature type="domain" description="v-SNARE coiled-coil homology" evidence="3">
    <location>
        <begin position="151"/>
        <end position="210"/>
    </location>
</feature>
<feature type="modified residue" description="N-acetylserine" evidence="2">
    <location>
        <position position="2"/>
    </location>
</feature>
<proteinExistence type="evidence at protein level"/>
<protein>
    <recommendedName>
        <fullName>Syntaxin-binding protein 6</fullName>
    </recommendedName>
</protein>
<keyword id="KW-0007">Acetylation</keyword>
<keyword id="KW-0175">Coiled coil</keyword>
<keyword id="KW-0963">Cytoplasm</keyword>
<keyword id="KW-0472">Membrane</keyword>
<keyword id="KW-1185">Reference proteome</keyword>
<gene>
    <name type="primary">Stxbp6</name>
</gene>
<reference key="1">
    <citation type="journal article" date="2004" name="Genome Res.">
        <title>The status, quality, and expansion of the NIH full-length cDNA project: the Mammalian Gene Collection (MGC).</title>
        <authorList>
            <consortium name="The MGC Project Team"/>
        </authorList>
    </citation>
    <scope>NUCLEOTIDE SEQUENCE [LARGE SCALE MRNA]</scope>
    <source>
        <tissue>Mammary tumor</tissue>
    </source>
</reference>
<reference key="2">
    <citation type="journal article" date="2010" name="Cell">
        <title>A tissue-specific atlas of mouse protein phosphorylation and expression.</title>
        <authorList>
            <person name="Huttlin E.L."/>
            <person name="Jedrychowski M.P."/>
            <person name="Elias J.E."/>
            <person name="Goswami T."/>
            <person name="Rad R."/>
            <person name="Beausoleil S.A."/>
            <person name="Villen J."/>
            <person name="Haas W."/>
            <person name="Sowa M.E."/>
            <person name="Gygi S.P."/>
        </authorList>
    </citation>
    <scope>IDENTIFICATION BY MASS SPECTROMETRY [LARGE SCALE ANALYSIS]</scope>
    <source>
        <tissue>Brain</tissue>
        <tissue>Lung</tissue>
    </source>
</reference>
<evidence type="ECO:0000250" key="1"/>
<evidence type="ECO:0000250" key="2">
    <source>
        <dbReference type="UniProtKB" id="Q8NFX7"/>
    </source>
</evidence>
<evidence type="ECO:0000255" key="3">
    <source>
        <dbReference type="PROSITE-ProRule" id="PRU00290"/>
    </source>
</evidence>
<organism>
    <name type="scientific">Mus musculus</name>
    <name type="common">Mouse</name>
    <dbReference type="NCBI Taxonomy" id="10090"/>
    <lineage>
        <taxon>Eukaryota</taxon>
        <taxon>Metazoa</taxon>
        <taxon>Chordata</taxon>
        <taxon>Craniata</taxon>
        <taxon>Vertebrata</taxon>
        <taxon>Euteleostomi</taxon>
        <taxon>Mammalia</taxon>
        <taxon>Eutheria</taxon>
        <taxon>Euarchontoglires</taxon>
        <taxon>Glires</taxon>
        <taxon>Rodentia</taxon>
        <taxon>Myomorpha</taxon>
        <taxon>Muroidea</taxon>
        <taxon>Muridae</taxon>
        <taxon>Murinae</taxon>
        <taxon>Mus</taxon>
        <taxon>Mus</taxon>
    </lineage>
</organism>
<sequence>MSAKSAISKEIFAPLDERMLGAVQVKRRTKKKIPFLATGGQGEYLTYICLSVTNKKPTQASITKVKQFEGSTSFVRRSQWMLEQLRQVNGIDPNRDSAEFDLLFENAFDQWVASTASEKCTFFQILHHTCQRYLTDRKPEFINCQSKIMGGNSILHSAADSVTSAVQKASQALNERGERLGRAEEKTEDMKNSAQQFAETAHKLAMKHKC</sequence>
<dbReference type="EMBL" id="BC024598">
    <property type="protein sequence ID" value="AAH24598.1"/>
    <property type="molecule type" value="mRNA"/>
</dbReference>
<dbReference type="CCDS" id="CCDS25898.1"/>
<dbReference type="SMR" id="Q8R3T5"/>
<dbReference type="FunCoup" id="Q8R3T5">
    <property type="interactions" value="10"/>
</dbReference>
<dbReference type="STRING" id="10090.ENSMUSP00000052639"/>
<dbReference type="iPTMnet" id="Q8R3T5"/>
<dbReference type="PhosphoSitePlus" id="Q8R3T5"/>
<dbReference type="PaxDb" id="10090-ENSMUSP00000112551"/>
<dbReference type="ProteomicsDB" id="258771"/>
<dbReference type="AGR" id="MGI:2384963"/>
<dbReference type="MGI" id="MGI:2384963">
    <property type="gene designation" value="Stxbp6"/>
</dbReference>
<dbReference type="eggNOG" id="KOG1983">
    <property type="taxonomic scope" value="Eukaryota"/>
</dbReference>
<dbReference type="InParanoid" id="Q8R3T5"/>
<dbReference type="PhylomeDB" id="Q8R3T5"/>
<dbReference type="ChiTaRS" id="Stxbp6">
    <property type="organism name" value="mouse"/>
</dbReference>
<dbReference type="PRO" id="PR:Q8R3T5"/>
<dbReference type="Proteomes" id="UP000000589">
    <property type="component" value="Unplaced"/>
</dbReference>
<dbReference type="RNAct" id="Q8R3T5">
    <property type="molecule type" value="protein"/>
</dbReference>
<dbReference type="GO" id="GO:0005737">
    <property type="term" value="C:cytoplasm"/>
    <property type="evidence" value="ECO:0007669"/>
    <property type="project" value="UniProtKB-SubCell"/>
</dbReference>
<dbReference type="GO" id="GO:0016020">
    <property type="term" value="C:membrane"/>
    <property type="evidence" value="ECO:0007669"/>
    <property type="project" value="UniProtKB-SubCell"/>
</dbReference>
<dbReference type="GO" id="GO:0035542">
    <property type="term" value="P:regulation of SNARE complex assembly"/>
    <property type="evidence" value="ECO:0007669"/>
    <property type="project" value="InterPro"/>
</dbReference>
<dbReference type="GO" id="GO:0035493">
    <property type="term" value="P:SNARE complex assembly"/>
    <property type="evidence" value="ECO:0000250"/>
    <property type="project" value="ParkinsonsUK-UCL"/>
</dbReference>
<dbReference type="CDD" id="cd14681">
    <property type="entry name" value="PH-STXBP6"/>
    <property type="match status" value="1"/>
</dbReference>
<dbReference type="CDD" id="cd15892">
    <property type="entry name" value="R-SNARE_STXBP6"/>
    <property type="match status" value="1"/>
</dbReference>
<dbReference type="FunFam" id="1.20.5.110:FF:000029">
    <property type="entry name" value="Syntaxin-binding protein 6"/>
    <property type="match status" value="1"/>
</dbReference>
<dbReference type="FunFam" id="2.30.29.90:FF:000002">
    <property type="entry name" value="syntaxin-binding protein 6"/>
    <property type="match status" value="1"/>
</dbReference>
<dbReference type="Gene3D" id="1.20.5.110">
    <property type="match status" value="1"/>
</dbReference>
<dbReference type="Gene3D" id="2.30.29.90">
    <property type="match status" value="1"/>
</dbReference>
<dbReference type="InterPro" id="IPR028258">
    <property type="entry name" value="Sec3-PIP2_bind"/>
</dbReference>
<dbReference type="InterPro" id="IPR037821">
    <property type="entry name" value="STXBP6_PH"/>
</dbReference>
<dbReference type="InterPro" id="IPR037822">
    <property type="entry name" value="STXBP6_SNARE"/>
</dbReference>
<dbReference type="InterPro" id="IPR042855">
    <property type="entry name" value="V_SNARE_CC"/>
</dbReference>
<dbReference type="PANTHER" id="PTHR16092:SF14">
    <property type="entry name" value="EXOCYST COMPLEX COMPONENT 1 ISOFORM X1"/>
    <property type="match status" value="1"/>
</dbReference>
<dbReference type="PANTHER" id="PTHR16092">
    <property type="entry name" value="SEC3/SYNTAXIN-RELATED"/>
    <property type="match status" value="1"/>
</dbReference>
<dbReference type="Pfam" id="PF15277">
    <property type="entry name" value="Sec3-PIP2_bind"/>
    <property type="match status" value="1"/>
</dbReference>
<dbReference type="Pfam" id="PF00957">
    <property type="entry name" value="Synaptobrevin"/>
    <property type="match status" value="1"/>
</dbReference>
<dbReference type="SMART" id="SM01313">
    <property type="entry name" value="Sec3-PIP2_bind"/>
    <property type="match status" value="1"/>
</dbReference>
<dbReference type="SUPFAM" id="SSF58038">
    <property type="entry name" value="SNARE fusion complex"/>
    <property type="match status" value="1"/>
</dbReference>
<dbReference type="PROSITE" id="PS50892">
    <property type="entry name" value="V_SNARE"/>
    <property type="match status" value="1"/>
</dbReference>